<accession>O42667</accession>
<dbReference type="EMBL" id="AB000269">
    <property type="protein sequence ID" value="BAA31857.1"/>
    <property type="molecule type" value="Genomic_DNA"/>
</dbReference>
<dbReference type="EMBL" id="CU329670">
    <property type="protein sequence ID" value="CAA15832.1"/>
    <property type="molecule type" value="Genomic_DNA"/>
</dbReference>
<dbReference type="PIR" id="T38446">
    <property type="entry name" value="T38446"/>
</dbReference>
<dbReference type="PIR" id="T38993">
    <property type="entry name" value="T38993"/>
</dbReference>
<dbReference type="RefSeq" id="NP_594619.1">
    <property type="nucleotide sequence ID" value="NM_001020047.1"/>
</dbReference>
<dbReference type="SMR" id="O42667"/>
<dbReference type="BioGRID" id="278546">
    <property type="interactions" value="80"/>
</dbReference>
<dbReference type="FunCoup" id="O42667">
    <property type="interactions" value="11"/>
</dbReference>
<dbReference type="IntAct" id="O42667">
    <property type="interactions" value="4"/>
</dbReference>
<dbReference type="STRING" id="284812.O42667"/>
<dbReference type="iPTMnet" id="O42667"/>
<dbReference type="PaxDb" id="4896-SPAC27D7.13c.1"/>
<dbReference type="EnsemblFungi" id="SPAC27D7.13c.1">
    <property type="protein sequence ID" value="SPAC27D7.13c.1:pep"/>
    <property type="gene ID" value="SPAC27D7.13c"/>
</dbReference>
<dbReference type="GeneID" id="2542069"/>
<dbReference type="KEGG" id="spo:2542069"/>
<dbReference type="PomBase" id="SPAC27D7.13c">
    <property type="gene designation" value="ssm4"/>
</dbReference>
<dbReference type="VEuPathDB" id="FungiDB:SPAC27D7.13c"/>
<dbReference type="eggNOG" id="KOG4568">
    <property type="taxonomic scope" value="Eukaryota"/>
</dbReference>
<dbReference type="HOGENOM" id="CLU_410015_0_0_1"/>
<dbReference type="InParanoid" id="O42667"/>
<dbReference type="OMA" id="DELMCEN"/>
<dbReference type="PhylomeDB" id="O42667"/>
<dbReference type="PRO" id="PR:O42667"/>
<dbReference type="Proteomes" id="UP000002485">
    <property type="component" value="Chromosome I"/>
</dbReference>
<dbReference type="GO" id="GO:0051285">
    <property type="term" value="C:cell cortex of cell tip"/>
    <property type="evidence" value="ECO:0000314"/>
    <property type="project" value="PomBase"/>
</dbReference>
<dbReference type="GO" id="GO:0051286">
    <property type="term" value="C:cell tip"/>
    <property type="evidence" value="ECO:0000318"/>
    <property type="project" value="GO_Central"/>
</dbReference>
<dbReference type="GO" id="GO:1903754">
    <property type="term" value="C:cortical microtubule plus-end"/>
    <property type="evidence" value="ECO:0000314"/>
    <property type="project" value="PomBase"/>
</dbReference>
<dbReference type="GO" id="GO:0005881">
    <property type="term" value="C:cytoplasmic microtubule"/>
    <property type="evidence" value="ECO:0000314"/>
    <property type="project" value="PomBase"/>
</dbReference>
<dbReference type="GO" id="GO:0005869">
    <property type="term" value="C:dynactin complex"/>
    <property type="evidence" value="ECO:0000304"/>
    <property type="project" value="PomBase"/>
</dbReference>
<dbReference type="GO" id="GO:0035974">
    <property type="term" value="C:meiotic spindle pole body"/>
    <property type="evidence" value="ECO:0000314"/>
    <property type="project" value="PomBase"/>
</dbReference>
<dbReference type="GO" id="GO:0005875">
    <property type="term" value="C:microtubule associated complex"/>
    <property type="evidence" value="ECO:0000318"/>
    <property type="project" value="GO_Central"/>
</dbReference>
<dbReference type="GO" id="GO:0015630">
    <property type="term" value="C:microtubule cytoskeleton"/>
    <property type="evidence" value="ECO:0007005"/>
    <property type="project" value="PomBase"/>
</dbReference>
<dbReference type="GO" id="GO:0072686">
    <property type="term" value="C:mitotic spindle"/>
    <property type="evidence" value="ECO:0000314"/>
    <property type="project" value="PomBase"/>
</dbReference>
<dbReference type="GO" id="GO:0110092">
    <property type="term" value="C:nucleus leading edge"/>
    <property type="evidence" value="ECO:0000314"/>
    <property type="project" value="PomBase"/>
</dbReference>
<dbReference type="GO" id="GO:0005819">
    <property type="term" value="C:spindle"/>
    <property type="evidence" value="ECO:0000318"/>
    <property type="project" value="GO_Central"/>
</dbReference>
<dbReference type="GO" id="GO:0005816">
    <property type="term" value="C:spindle pole body"/>
    <property type="evidence" value="ECO:0000318"/>
    <property type="project" value="GO_Central"/>
</dbReference>
<dbReference type="GO" id="GO:0030989">
    <property type="term" value="P:dynein-driven meiotic oscillatory nuclear movement"/>
    <property type="evidence" value="ECO:0000315"/>
    <property type="project" value="PomBase"/>
</dbReference>
<dbReference type="GO" id="GO:0007127">
    <property type="term" value="P:meiosis I"/>
    <property type="evidence" value="ECO:0000316"/>
    <property type="project" value="PomBase"/>
</dbReference>
<dbReference type="GO" id="GO:0000743">
    <property type="term" value="P:nuclear migration involved in conjugation with cellular fusion"/>
    <property type="evidence" value="ECO:0000318"/>
    <property type="project" value="GO_Central"/>
</dbReference>
<dbReference type="FunFam" id="2.30.30.190:FF:000014">
    <property type="entry name" value="Uncharacterized protein, isoform E"/>
    <property type="match status" value="1"/>
</dbReference>
<dbReference type="Gene3D" id="2.30.30.190">
    <property type="entry name" value="CAP Gly-rich-like domain"/>
    <property type="match status" value="1"/>
</dbReference>
<dbReference type="InterPro" id="IPR036859">
    <property type="entry name" value="CAP-Gly_dom_sf"/>
</dbReference>
<dbReference type="InterPro" id="IPR000938">
    <property type="entry name" value="CAP-Gly_domain"/>
</dbReference>
<dbReference type="PANTHER" id="PTHR18916">
    <property type="entry name" value="DYNACTIN 1-RELATED MICROTUBULE-BINDING"/>
    <property type="match status" value="1"/>
</dbReference>
<dbReference type="Pfam" id="PF01302">
    <property type="entry name" value="CAP_GLY"/>
    <property type="match status" value="1"/>
</dbReference>
<dbReference type="SMART" id="SM01052">
    <property type="entry name" value="CAP_GLY"/>
    <property type="match status" value="1"/>
</dbReference>
<dbReference type="SUPFAM" id="SSF74924">
    <property type="entry name" value="Cap-Gly domain"/>
    <property type="match status" value="1"/>
</dbReference>
<dbReference type="PROSITE" id="PS00845">
    <property type="entry name" value="CAP_GLY_1"/>
    <property type="match status" value="1"/>
</dbReference>
<dbReference type="PROSITE" id="PS50245">
    <property type="entry name" value="CAP_GLY_2"/>
    <property type="match status" value="1"/>
</dbReference>
<evidence type="ECO:0000255" key="1"/>
<evidence type="ECO:0000255" key="2">
    <source>
        <dbReference type="PROSITE-ProRule" id="PRU00045"/>
    </source>
</evidence>
<evidence type="ECO:0000269" key="3">
    <source>
    </source>
</evidence>
<feature type="chain" id="PRO_0000083532" description="Microtubule-associated protein ssm4">
    <location>
        <begin position="1"/>
        <end position="670"/>
    </location>
</feature>
<feature type="domain" description="CAP-Gly" evidence="2">
    <location>
        <begin position="23"/>
        <end position="65"/>
    </location>
</feature>
<feature type="coiled-coil region" evidence="1">
    <location>
        <begin position="209"/>
        <end position="254"/>
    </location>
</feature>
<feature type="coiled-coil region" evidence="1">
    <location>
        <begin position="404"/>
        <end position="582"/>
    </location>
</feature>
<feature type="modified residue" description="Phosphoserine" evidence="3">
    <location>
        <position position="460"/>
    </location>
</feature>
<feature type="modified residue" description="Phosphothreonine" evidence="3">
    <location>
        <position position="606"/>
    </location>
</feature>
<comment type="function">
    <text>Binds to nuclear microtubules with the effect of either modifying their structure or function. This then promotes meiotic nuclear division.</text>
</comment>
<comment type="interaction">
    <interactant intactId="EBI-1556587">
        <id>O42667</id>
    </interactant>
    <interactant intactId="EBI-1112490">
        <id>O13290</id>
        <label>dhc1</label>
    </interactant>
    <organismsDiffer>false</organismsDiffer>
    <experiments>2</experiments>
</comment>
<comment type="interaction">
    <interactant intactId="EBI-1556587">
        <id>O42667</id>
    </interactant>
    <interactant intactId="EBI-1542278">
        <id>Q9UTS6</id>
        <label>dlc1</label>
    </interactant>
    <organismsDiffer>false</organismsDiffer>
    <experiments>3</experiments>
</comment>
<comment type="subcellular location">
    <subcellularLocation>
        <location>Cytoplasm</location>
        <location>Cytoskeleton</location>
        <location>Spindle</location>
    </subcellularLocation>
    <text>Mitotic spindle.</text>
</comment>
<reference key="1">
    <citation type="journal article" date="1997" name="Genes Cells">
        <title>Microtubule-associated coiled-coil protein Ssm4 is involved in the meiotic development in fission yeast.</title>
        <authorList>
            <person name="Yamashita A."/>
            <person name="Watanabe Y."/>
            <person name="Yamamoto M."/>
        </authorList>
    </citation>
    <scope>NUCLEOTIDE SEQUENCE [GENOMIC DNA]</scope>
</reference>
<reference key="2">
    <citation type="journal article" date="2002" name="Nature">
        <title>The genome sequence of Schizosaccharomyces pombe.</title>
        <authorList>
            <person name="Wood V."/>
            <person name="Gwilliam R."/>
            <person name="Rajandream M.A."/>
            <person name="Lyne M.H."/>
            <person name="Lyne R."/>
            <person name="Stewart A."/>
            <person name="Sgouros J.G."/>
            <person name="Peat N."/>
            <person name="Hayles J."/>
            <person name="Baker S.G."/>
            <person name="Basham D."/>
            <person name="Bowman S."/>
            <person name="Brooks K."/>
            <person name="Brown D."/>
            <person name="Brown S."/>
            <person name="Chillingworth T."/>
            <person name="Churcher C.M."/>
            <person name="Collins M."/>
            <person name="Connor R."/>
            <person name="Cronin A."/>
            <person name="Davis P."/>
            <person name="Feltwell T."/>
            <person name="Fraser A."/>
            <person name="Gentles S."/>
            <person name="Goble A."/>
            <person name="Hamlin N."/>
            <person name="Harris D.E."/>
            <person name="Hidalgo J."/>
            <person name="Hodgson G."/>
            <person name="Holroyd S."/>
            <person name="Hornsby T."/>
            <person name="Howarth S."/>
            <person name="Huckle E.J."/>
            <person name="Hunt S."/>
            <person name="Jagels K."/>
            <person name="James K.D."/>
            <person name="Jones L."/>
            <person name="Jones M."/>
            <person name="Leather S."/>
            <person name="McDonald S."/>
            <person name="McLean J."/>
            <person name="Mooney P."/>
            <person name="Moule S."/>
            <person name="Mungall K.L."/>
            <person name="Murphy L.D."/>
            <person name="Niblett D."/>
            <person name="Odell C."/>
            <person name="Oliver K."/>
            <person name="O'Neil S."/>
            <person name="Pearson D."/>
            <person name="Quail M.A."/>
            <person name="Rabbinowitsch E."/>
            <person name="Rutherford K.M."/>
            <person name="Rutter S."/>
            <person name="Saunders D."/>
            <person name="Seeger K."/>
            <person name="Sharp S."/>
            <person name="Skelton J."/>
            <person name="Simmonds M.N."/>
            <person name="Squares R."/>
            <person name="Squares S."/>
            <person name="Stevens K."/>
            <person name="Taylor K."/>
            <person name="Taylor R.G."/>
            <person name="Tivey A."/>
            <person name="Walsh S.V."/>
            <person name="Warren T."/>
            <person name="Whitehead S."/>
            <person name="Woodward J.R."/>
            <person name="Volckaert G."/>
            <person name="Aert R."/>
            <person name="Robben J."/>
            <person name="Grymonprez B."/>
            <person name="Weltjens I."/>
            <person name="Vanstreels E."/>
            <person name="Rieger M."/>
            <person name="Schaefer M."/>
            <person name="Mueller-Auer S."/>
            <person name="Gabel C."/>
            <person name="Fuchs M."/>
            <person name="Duesterhoeft A."/>
            <person name="Fritzc C."/>
            <person name="Holzer E."/>
            <person name="Moestl D."/>
            <person name="Hilbert H."/>
            <person name="Borzym K."/>
            <person name="Langer I."/>
            <person name="Beck A."/>
            <person name="Lehrach H."/>
            <person name="Reinhardt R."/>
            <person name="Pohl T.M."/>
            <person name="Eger P."/>
            <person name="Zimmermann W."/>
            <person name="Wedler H."/>
            <person name="Wambutt R."/>
            <person name="Purnelle B."/>
            <person name="Goffeau A."/>
            <person name="Cadieu E."/>
            <person name="Dreano S."/>
            <person name="Gloux S."/>
            <person name="Lelaure V."/>
            <person name="Mottier S."/>
            <person name="Galibert F."/>
            <person name="Aves S.J."/>
            <person name="Xiang Z."/>
            <person name="Hunt C."/>
            <person name="Moore K."/>
            <person name="Hurst S.M."/>
            <person name="Lucas M."/>
            <person name="Rochet M."/>
            <person name="Gaillardin C."/>
            <person name="Tallada V.A."/>
            <person name="Garzon A."/>
            <person name="Thode G."/>
            <person name="Daga R.R."/>
            <person name="Cruzado L."/>
            <person name="Jimenez J."/>
            <person name="Sanchez M."/>
            <person name="del Rey F."/>
            <person name="Benito J."/>
            <person name="Dominguez A."/>
            <person name="Revuelta J.L."/>
            <person name="Moreno S."/>
            <person name="Armstrong J."/>
            <person name="Forsburg S.L."/>
            <person name="Cerutti L."/>
            <person name="Lowe T."/>
            <person name="McCombie W.R."/>
            <person name="Paulsen I."/>
            <person name="Potashkin J."/>
            <person name="Shpakovski G.V."/>
            <person name="Ussery D."/>
            <person name="Barrell B.G."/>
            <person name="Nurse P."/>
        </authorList>
    </citation>
    <scope>NUCLEOTIDE SEQUENCE [LARGE SCALE GENOMIC DNA]</scope>
    <source>
        <strain>972 / ATCC 24843</strain>
    </source>
</reference>
<reference key="3">
    <citation type="journal article" date="2008" name="J. Proteome Res.">
        <title>Phosphoproteome analysis of fission yeast.</title>
        <authorList>
            <person name="Wilson-Grady J.T."/>
            <person name="Villen J."/>
            <person name="Gygi S.P."/>
        </authorList>
    </citation>
    <scope>PHOSPHORYLATION [LARGE SCALE ANALYSIS] AT SER-460 AND THR-606</scope>
    <scope>IDENTIFICATION BY MASS SPECTROMETRY</scope>
</reference>
<protein>
    <recommendedName>
        <fullName>Microtubule-associated protein ssm4</fullName>
    </recommendedName>
</protein>
<keyword id="KW-0175">Coiled coil</keyword>
<keyword id="KW-0963">Cytoplasm</keyword>
<keyword id="KW-0206">Cytoskeleton</keyword>
<keyword id="KW-0469">Meiosis</keyword>
<keyword id="KW-0493">Microtubule</keyword>
<keyword id="KW-0597">Phosphoprotein</keyword>
<keyword id="KW-1185">Reference proteome</keyword>
<sequence>MSYLSVGDEVLIRGELGIVRFAGSTDFESGIWLGVELLNGKGKNDGSVKGKRYFSCEKGKGIFVRACSSNVMKRPSVVKSRKKGSENISNFMEKTKAIKQKSRREPSKFERSLARPLCITPIDSSTPTKTATFYTSSTTENLDELNFSTEELSSFDTTLLNSDTSKLSGLDDSSFMEEEFVWQVDNVLQECEKKFTPHSKGSYLKENLKSELRKGRLDELMCENTALKEKIDKLNKELEKVEPQLTFLRSKNSIEKPRNFRREKFLKKFLAMQKEIKYLRKRKLQIRKIPNYKYSDRSLNSKTPKSQDNWTTQVTPSSLLGVSEVSKVLQLKQVQVDITELVKIPKNPFSEKLTISNVNRYLNIVPGSLDLQFSLTNENFVHWNSTVYQELLNLKSNNSSVDGVKTRRQLLEENALLSHKVLKLTEEIQDLETLNQLNTEIEARQSEKLNEVQEETQRLSQLLISSQPALTEVKHLKLCLSDSQEELLQLNAKLEKANIVIDELNSAKLKLSKQVEEESSMKDDLTEMNQRLKEQIESYENEVNSEITSRTLKEFETLKTQYEKNLCNLREQLKTARMKLADKYPQGDNTSENIDWLKHSLRDSNTENSIPSPLTFACKEIRKLVADIKPVSVEKQLALNWKKDIERPSFHHNQQLFNYCQLTDILSKKC</sequence>
<name>SSM4_SCHPO</name>
<proteinExistence type="evidence at protein level"/>
<organism>
    <name type="scientific">Schizosaccharomyces pombe (strain 972 / ATCC 24843)</name>
    <name type="common">Fission yeast</name>
    <dbReference type="NCBI Taxonomy" id="284812"/>
    <lineage>
        <taxon>Eukaryota</taxon>
        <taxon>Fungi</taxon>
        <taxon>Dikarya</taxon>
        <taxon>Ascomycota</taxon>
        <taxon>Taphrinomycotina</taxon>
        <taxon>Schizosaccharomycetes</taxon>
        <taxon>Schizosaccharomycetales</taxon>
        <taxon>Schizosaccharomycetaceae</taxon>
        <taxon>Schizosaccharomyces</taxon>
    </lineage>
</organism>
<gene>
    <name type="primary">ssm4</name>
    <name type="ORF">SPAC27D7.13c</name>
    <name type="ORF">SPAC637.01c</name>
</gene>